<proteinExistence type="inferred from homology"/>
<sequence>MGQKNHFDVIVIGSGPGGEGAAMGLTKGGKNVAIIEKESSVGGGCTHWGTIPSKALRHAVSRIIEFNSNPLFCKNNSSIHATFSTILSHAKSVIDKQTRLRQGFYDRNQCTLIFGAAHFIDAHTVAVKKADGSIDTYSADKFVIATGSRPYHPKDVDFGHPRIYDSDSILNLEHDPRHIIIYGAGVIGCEYASIFRGLDVKTDLINTRDRLLSFLDNEVSDALSYHFWNSGVVIRNDETYDKVEGTSDGVIVHLKSGKKMRADCLLYANGRTGNTDKLNLESVGLQADSRGQLVVNANYQTQVEHIYAVGDVIGYPSLASAAYDQGRFVAQAIIHGQAAHLLTEDIPTGIYTIPEISSVGRTEQELTAAKVPYEVGRASFKHLARAQIAGKDIGSLKILFHRETKEILGIHCFGERAAEIIHIGQAIMEQKGEANTIEYFVNTTFNYPTMAEAFRVAALNGLNRLF</sequence>
<reference key="1">
    <citation type="journal article" date="2008" name="PLoS ONE">
        <title>A recalibrated molecular clock and independent origins for the cholera pandemic clones.</title>
        <authorList>
            <person name="Feng L."/>
            <person name="Reeves P.R."/>
            <person name="Lan R."/>
            <person name="Ren Y."/>
            <person name="Gao C."/>
            <person name="Zhou Z."/>
            <person name="Ren Y."/>
            <person name="Cheng J."/>
            <person name="Wang W."/>
            <person name="Wang J."/>
            <person name="Qian W."/>
            <person name="Li D."/>
            <person name="Wang L."/>
        </authorList>
    </citation>
    <scope>NUCLEOTIDE SEQUENCE [LARGE SCALE GENOMIC DNA]</scope>
    <source>
        <strain>M66-2</strain>
    </source>
</reference>
<protein>
    <recommendedName>
        <fullName evidence="1">Soluble pyridine nucleotide transhydrogenase</fullName>
        <shortName evidence="1">STH</shortName>
        <ecNumber evidence="1">1.6.1.1</ecNumber>
    </recommendedName>
    <alternativeName>
        <fullName evidence="1">NAD(P)(+) transhydrogenase [B-specific]</fullName>
    </alternativeName>
</protein>
<gene>
    <name evidence="1" type="primary">sthA</name>
    <name type="ordered locus">VCM66_0151</name>
</gene>
<feature type="chain" id="PRO_1000193460" description="Soluble pyridine nucleotide transhydrogenase">
    <location>
        <begin position="1"/>
        <end position="466"/>
    </location>
</feature>
<feature type="binding site" evidence="1">
    <location>
        <begin position="36"/>
        <end position="45"/>
    </location>
    <ligand>
        <name>FAD</name>
        <dbReference type="ChEBI" id="CHEBI:57692"/>
    </ligand>
</feature>
<name>STHA_VIBCM</name>
<comment type="function">
    <text evidence="1">Conversion of NADPH, generated by peripheral catabolic pathways, to NADH, which can enter the respiratory chain for energy generation.</text>
</comment>
<comment type="catalytic activity">
    <reaction evidence="1">
        <text>NAD(+) + NADPH = NADH + NADP(+)</text>
        <dbReference type="Rhea" id="RHEA:11692"/>
        <dbReference type="ChEBI" id="CHEBI:57540"/>
        <dbReference type="ChEBI" id="CHEBI:57783"/>
        <dbReference type="ChEBI" id="CHEBI:57945"/>
        <dbReference type="ChEBI" id="CHEBI:58349"/>
        <dbReference type="EC" id="1.6.1.1"/>
    </reaction>
</comment>
<comment type="cofactor">
    <cofactor evidence="1">
        <name>FAD</name>
        <dbReference type="ChEBI" id="CHEBI:57692"/>
    </cofactor>
    <text evidence="1">Binds 1 FAD per subunit.</text>
</comment>
<comment type="subcellular location">
    <subcellularLocation>
        <location evidence="1">Cytoplasm</location>
    </subcellularLocation>
</comment>
<comment type="similarity">
    <text evidence="1">Belongs to the class-I pyridine nucleotide-disulfide oxidoreductase family.</text>
</comment>
<keyword id="KW-0963">Cytoplasm</keyword>
<keyword id="KW-0274">FAD</keyword>
<keyword id="KW-0285">Flavoprotein</keyword>
<keyword id="KW-0520">NAD</keyword>
<keyword id="KW-0521">NADP</keyword>
<keyword id="KW-0560">Oxidoreductase</keyword>
<accession>C3LPZ2</accession>
<dbReference type="EC" id="1.6.1.1" evidence="1"/>
<dbReference type="EMBL" id="CP001233">
    <property type="protein sequence ID" value="ACP04486.1"/>
    <property type="molecule type" value="Genomic_DNA"/>
</dbReference>
<dbReference type="RefSeq" id="WP_000529898.1">
    <property type="nucleotide sequence ID" value="NC_012578.1"/>
</dbReference>
<dbReference type="SMR" id="C3LPZ2"/>
<dbReference type="KEGG" id="vcm:VCM66_0151"/>
<dbReference type="HOGENOM" id="CLU_016755_0_0_6"/>
<dbReference type="Proteomes" id="UP000001217">
    <property type="component" value="Chromosome I"/>
</dbReference>
<dbReference type="GO" id="GO:0005829">
    <property type="term" value="C:cytosol"/>
    <property type="evidence" value="ECO:0007669"/>
    <property type="project" value="TreeGrafter"/>
</dbReference>
<dbReference type="GO" id="GO:0004148">
    <property type="term" value="F:dihydrolipoyl dehydrogenase (NADH) activity"/>
    <property type="evidence" value="ECO:0007669"/>
    <property type="project" value="TreeGrafter"/>
</dbReference>
<dbReference type="GO" id="GO:0050660">
    <property type="term" value="F:flavin adenine dinucleotide binding"/>
    <property type="evidence" value="ECO:0007669"/>
    <property type="project" value="TreeGrafter"/>
</dbReference>
<dbReference type="GO" id="GO:0003957">
    <property type="term" value="F:NAD(P)+ transhydrogenase (Si-specific) activity"/>
    <property type="evidence" value="ECO:0007669"/>
    <property type="project" value="UniProtKB-UniRule"/>
</dbReference>
<dbReference type="GO" id="GO:0006103">
    <property type="term" value="P:2-oxoglutarate metabolic process"/>
    <property type="evidence" value="ECO:0007669"/>
    <property type="project" value="TreeGrafter"/>
</dbReference>
<dbReference type="GO" id="GO:0006739">
    <property type="term" value="P:NADP metabolic process"/>
    <property type="evidence" value="ECO:0007669"/>
    <property type="project" value="UniProtKB-UniRule"/>
</dbReference>
<dbReference type="FunFam" id="3.30.390.30:FF:000002">
    <property type="entry name" value="Soluble pyridine nucleotide transhydrogenase"/>
    <property type="match status" value="1"/>
</dbReference>
<dbReference type="FunFam" id="3.50.50.60:FF:000008">
    <property type="entry name" value="Soluble pyridine nucleotide transhydrogenase"/>
    <property type="match status" value="1"/>
</dbReference>
<dbReference type="Gene3D" id="3.30.390.30">
    <property type="match status" value="1"/>
</dbReference>
<dbReference type="Gene3D" id="3.50.50.60">
    <property type="entry name" value="FAD/NAD(P)-binding domain"/>
    <property type="match status" value="2"/>
</dbReference>
<dbReference type="HAMAP" id="MF_00247">
    <property type="entry name" value="SthA"/>
    <property type="match status" value="1"/>
</dbReference>
<dbReference type="InterPro" id="IPR050151">
    <property type="entry name" value="Class-I_Pyr_Nuc-Dis_Oxidored"/>
</dbReference>
<dbReference type="InterPro" id="IPR036188">
    <property type="entry name" value="FAD/NAD-bd_sf"/>
</dbReference>
<dbReference type="InterPro" id="IPR023753">
    <property type="entry name" value="FAD/NAD-binding_dom"/>
</dbReference>
<dbReference type="InterPro" id="IPR016156">
    <property type="entry name" value="FAD/NAD-linked_Rdtase_dimer_sf"/>
</dbReference>
<dbReference type="InterPro" id="IPR001100">
    <property type="entry name" value="Pyr_nuc-diS_OxRdtase"/>
</dbReference>
<dbReference type="InterPro" id="IPR004099">
    <property type="entry name" value="Pyr_nucl-diS_OxRdtase_dimer"/>
</dbReference>
<dbReference type="InterPro" id="IPR022962">
    <property type="entry name" value="STH_gammaproteobact"/>
</dbReference>
<dbReference type="NCBIfam" id="NF003585">
    <property type="entry name" value="PRK05249.1"/>
    <property type="match status" value="1"/>
</dbReference>
<dbReference type="PANTHER" id="PTHR22912">
    <property type="entry name" value="DISULFIDE OXIDOREDUCTASE"/>
    <property type="match status" value="1"/>
</dbReference>
<dbReference type="PANTHER" id="PTHR22912:SF93">
    <property type="entry name" value="SOLUBLE PYRIDINE NUCLEOTIDE TRANSHYDROGENASE"/>
    <property type="match status" value="1"/>
</dbReference>
<dbReference type="Pfam" id="PF07992">
    <property type="entry name" value="Pyr_redox_2"/>
    <property type="match status" value="1"/>
</dbReference>
<dbReference type="Pfam" id="PF02852">
    <property type="entry name" value="Pyr_redox_dim"/>
    <property type="match status" value="1"/>
</dbReference>
<dbReference type="PIRSF" id="PIRSF000350">
    <property type="entry name" value="Mercury_reductase_MerA"/>
    <property type="match status" value="1"/>
</dbReference>
<dbReference type="PRINTS" id="PR00368">
    <property type="entry name" value="FADPNR"/>
</dbReference>
<dbReference type="PRINTS" id="PR00411">
    <property type="entry name" value="PNDRDTASEI"/>
</dbReference>
<dbReference type="SUPFAM" id="SSF51905">
    <property type="entry name" value="FAD/NAD(P)-binding domain"/>
    <property type="match status" value="1"/>
</dbReference>
<dbReference type="SUPFAM" id="SSF55424">
    <property type="entry name" value="FAD/NAD-linked reductases, dimerisation (C-terminal) domain"/>
    <property type="match status" value="1"/>
</dbReference>
<organism>
    <name type="scientific">Vibrio cholerae serotype O1 (strain M66-2)</name>
    <dbReference type="NCBI Taxonomy" id="579112"/>
    <lineage>
        <taxon>Bacteria</taxon>
        <taxon>Pseudomonadati</taxon>
        <taxon>Pseudomonadota</taxon>
        <taxon>Gammaproteobacteria</taxon>
        <taxon>Vibrionales</taxon>
        <taxon>Vibrionaceae</taxon>
        <taxon>Vibrio</taxon>
    </lineage>
</organism>
<evidence type="ECO:0000255" key="1">
    <source>
        <dbReference type="HAMAP-Rule" id="MF_00247"/>
    </source>
</evidence>